<reference key="1">
    <citation type="journal article" date="2003" name="Nature">
        <title>Genome divergence in two Prochlorococcus ecotypes reflects oceanic niche differentiation.</title>
        <authorList>
            <person name="Rocap G."/>
            <person name="Larimer F.W."/>
            <person name="Lamerdin J.E."/>
            <person name="Malfatti S."/>
            <person name="Chain P."/>
            <person name="Ahlgren N.A."/>
            <person name="Arellano A."/>
            <person name="Coleman M."/>
            <person name="Hauser L."/>
            <person name="Hess W.R."/>
            <person name="Johnson Z.I."/>
            <person name="Land M.L."/>
            <person name="Lindell D."/>
            <person name="Post A.F."/>
            <person name="Regala W."/>
            <person name="Shah M."/>
            <person name="Shaw S.L."/>
            <person name="Steglich C."/>
            <person name="Sullivan M.B."/>
            <person name="Ting C.S."/>
            <person name="Tolonen A."/>
            <person name="Webb E.A."/>
            <person name="Zinser E.R."/>
            <person name="Chisholm S.W."/>
        </authorList>
    </citation>
    <scope>NUCLEOTIDE SEQUENCE [LARGE SCALE GENOMIC DNA]</scope>
    <source>
        <strain>CCMP1986 / NIES-2087 / MED4</strain>
    </source>
</reference>
<dbReference type="EC" id="2.7.7.60" evidence="1"/>
<dbReference type="EMBL" id="BX548174">
    <property type="protein sequence ID" value="CAE18913.1"/>
    <property type="molecule type" value="Genomic_DNA"/>
</dbReference>
<dbReference type="RefSeq" id="WP_011132090.1">
    <property type="nucleotide sequence ID" value="NC_005072.1"/>
</dbReference>
<dbReference type="SMR" id="Q7V2M1"/>
<dbReference type="STRING" id="59919.PMM0454"/>
<dbReference type="KEGG" id="pmm:PMM0454"/>
<dbReference type="eggNOG" id="COG1211">
    <property type="taxonomic scope" value="Bacteria"/>
</dbReference>
<dbReference type="HOGENOM" id="CLU_061281_1_0_3"/>
<dbReference type="OrthoDB" id="9806837at2"/>
<dbReference type="UniPathway" id="UPA00056">
    <property type="reaction ID" value="UER00093"/>
</dbReference>
<dbReference type="Proteomes" id="UP000001026">
    <property type="component" value="Chromosome"/>
</dbReference>
<dbReference type="GO" id="GO:0050518">
    <property type="term" value="F:2-C-methyl-D-erythritol 4-phosphate cytidylyltransferase activity"/>
    <property type="evidence" value="ECO:0007669"/>
    <property type="project" value="UniProtKB-UniRule"/>
</dbReference>
<dbReference type="GO" id="GO:0019288">
    <property type="term" value="P:isopentenyl diphosphate biosynthetic process, methylerythritol 4-phosphate pathway"/>
    <property type="evidence" value="ECO:0007669"/>
    <property type="project" value="UniProtKB-UniRule"/>
</dbReference>
<dbReference type="CDD" id="cd02516">
    <property type="entry name" value="CDP-ME_synthetase"/>
    <property type="match status" value="1"/>
</dbReference>
<dbReference type="FunFam" id="3.90.550.10:FF:000003">
    <property type="entry name" value="2-C-methyl-D-erythritol 4-phosphate cytidylyltransferase"/>
    <property type="match status" value="1"/>
</dbReference>
<dbReference type="Gene3D" id="3.90.550.10">
    <property type="entry name" value="Spore Coat Polysaccharide Biosynthesis Protein SpsA, Chain A"/>
    <property type="match status" value="1"/>
</dbReference>
<dbReference type="HAMAP" id="MF_00108">
    <property type="entry name" value="IspD"/>
    <property type="match status" value="1"/>
</dbReference>
<dbReference type="InterPro" id="IPR001228">
    <property type="entry name" value="IspD"/>
</dbReference>
<dbReference type="InterPro" id="IPR034683">
    <property type="entry name" value="IspD/TarI"/>
</dbReference>
<dbReference type="InterPro" id="IPR050088">
    <property type="entry name" value="IspD/TarI_cytidylyltransf_bact"/>
</dbReference>
<dbReference type="InterPro" id="IPR018294">
    <property type="entry name" value="ISPD_synthase_CS"/>
</dbReference>
<dbReference type="InterPro" id="IPR029044">
    <property type="entry name" value="Nucleotide-diphossugar_trans"/>
</dbReference>
<dbReference type="NCBIfam" id="TIGR00453">
    <property type="entry name" value="ispD"/>
    <property type="match status" value="1"/>
</dbReference>
<dbReference type="PANTHER" id="PTHR32125">
    <property type="entry name" value="2-C-METHYL-D-ERYTHRITOL 4-PHOSPHATE CYTIDYLYLTRANSFERASE, CHLOROPLASTIC"/>
    <property type="match status" value="1"/>
</dbReference>
<dbReference type="PANTHER" id="PTHR32125:SF4">
    <property type="entry name" value="2-C-METHYL-D-ERYTHRITOL 4-PHOSPHATE CYTIDYLYLTRANSFERASE, CHLOROPLASTIC"/>
    <property type="match status" value="1"/>
</dbReference>
<dbReference type="Pfam" id="PF01128">
    <property type="entry name" value="IspD"/>
    <property type="match status" value="1"/>
</dbReference>
<dbReference type="SUPFAM" id="SSF53448">
    <property type="entry name" value="Nucleotide-diphospho-sugar transferases"/>
    <property type="match status" value="1"/>
</dbReference>
<dbReference type="PROSITE" id="PS01295">
    <property type="entry name" value="ISPD"/>
    <property type="match status" value="1"/>
</dbReference>
<proteinExistence type="inferred from homology"/>
<feature type="chain" id="PRO_0000075603" description="2-C-methyl-D-erythritol 4-phosphate cytidylyltransferase">
    <location>
        <begin position="1"/>
        <end position="223"/>
    </location>
</feature>
<feature type="site" description="Transition state stabilizer" evidence="1">
    <location>
        <position position="13"/>
    </location>
</feature>
<feature type="site" description="Transition state stabilizer" evidence="1">
    <location>
        <position position="20"/>
    </location>
</feature>
<feature type="site" description="Positions MEP for the nucleophilic attack" evidence="1">
    <location>
        <position position="150"/>
    </location>
</feature>
<feature type="site" description="Positions MEP for the nucleophilic attack" evidence="1">
    <location>
        <position position="206"/>
    </location>
</feature>
<keyword id="KW-0414">Isoprene biosynthesis</keyword>
<keyword id="KW-0548">Nucleotidyltransferase</keyword>
<keyword id="KW-0808">Transferase</keyword>
<accession>Q7V2M1</accession>
<gene>
    <name evidence="1" type="primary">ispD</name>
    <name type="ordered locus">PMM0454</name>
</gene>
<organism>
    <name type="scientific">Prochlorococcus marinus subsp. pastoris (strain CCMP1986 / NIES-2087 / MED4)</name>
    <dbReference type="NCBI Taxonomy" id="59919"/>
    <lineage>
        <taxon>Bacteria</taxon>
        <taxon>Bacillati</taxon>
        <taxon>Cyanobacteriota</taxon>
        <taxon>Cyanophyceae</taxon>
        <taxon>Synechococcales</taxon>
        <taxon>Prochlorococcaceae</taxon>
        <taxon>Prochlorococcus</taxon>
    </lineage>
</organism>
<name>ISPD_PROMP</name>
<evidence type="ECO:0000255" key="1">
    <source>
        <dbReference type="HAMAP-Rule" id="MF_00108"/>
    </source>
</evidence>
<comment type="function">
    <text evidence="1">Catalyzes the formation of 4-diphosphocytidyl-2-C-methyl-D-erythritol from CTP and 2-C-methyl-D-erythritol 4-phosphate (MEP).</text>
</comment>
<comment type="catalytic activity">
    <reaction evidence="1">
        <text>2-C-methyl-D-erythritol 4-phosphate + CTP + H(+) = 4-CDP-2-C-methyl-D-erythritol + diphosphate</text>
        <dbReference type="Rhea" id="RHEA:13429"/>
        <dbReference type="ChEBI" id="CHEBI:15378"/>
        <dbReference type="ChEBI" id="CHEBI:33019"/>
        <dbReference type="ChEBI" id="CHEBI:37563"/>
        <dbReference type="ChEBI" id="CHEBI:57823"/>
        <dbReference type="ChEBI" id="CHEBI:58262"/>
        <dbReference type="EC" id="2.7.7.60"/>
    </reaction>
</comment>
<comment type="pathway">
    <text evidence="1">Isoprenoid biosynthesis; isopentenyl diphosphate biosynthesis via DXP pathway; isopentenyl diphosphate from 1-deoxy-D-xylulose 5-phosphate: step 2/6.</text>
</comment>
<comment type="similarity">
    <text evidence="1">Belongs to the IspD/TarI cytidylyltransferase family. IspD subfamily.</text>
</comment>
<sequence>MHVLIPAAGSGSRMKAGRNKLLIELEGESLIFWTIKSVLSASLVSWVGIIGQPYDKQELLKSVKNFSNKIKWINGGDTRQKSVFNGLNSLPSTAEKVLIHDGARCLVGPDLINKCAMELEQNDAVILATKVTDTIKIVDNRGYIKETPNRQNLWAAQTPQGFLVKRLRKAHEMAIEKNWTVTDDASLFEMLNWQVKIIEGNSSNIKITSPLDLKIAKLFLKDF</sequence>
<protein>
    <recommendedName>
        <fullName evidence="1">2-C-methyl-D-erythritol 4-phosphate cytidylyltransferase</fullName>
        <ecNumber evidence="1">2.7.7.60</ecNumber>
    </recommendedName>
    <alternativeName>
        <fullName evidence="1">4-diphosphocytidyl-2C-methyl-D-erythritol synthase</fullName>
    </alternativeName>
    <alternativeName>
        <fullName evidence="1">MEP cytidylyltransferase</fullName>
        <shortName evidence="1">MCT</shortName>
    </alternativeName>
</protein>